<accession>A1UF79</accession>
<evidence type="ECO:0000255" key="1">
    <source>
        <dbReference type="HAMAP-Rule" id="MF_00184"/>
    </source>
</evidence>
<evidence type="ECO:0000255" key="2">
    <source>
        <dbReference type="PROSITE-ProRule" id="PRU01228"/>
    </source>
</evidence>
<protein>
    <recommendedName>
        <fullName evidence="1">Threonine--tRNA ligase</fullName>
        <ecNumber evidence="1">6.1.1.3</ecNumber>
    </recommendedName>
    <alternativeName>
        <fullName evidence="1">Threonyl-tRNA synthetase</fullName>
        <shortName evidence="1">ThrRS</shortName>
    </alternativeName>
</protein>
<dbReference type="EC" id="6.1.1.3" evidence="1"/>
<dbReference type="EMBL" id="CP000518">
    <property type="protein sequence ID" value="ABL91487.1"/>
    <property type="molecule type" value="Genomic_DNA"/>
</dbReference>
<dbReference type="SMR" id="A1UF79"/>
<dbReference type="STRING" id="189918.Mkms_2289"/>
<dbReference type="KEGG" id="mkm:Mkms_2289"/>
<dbReference type="HOGENOM" id="CLU_008554_0_1_11"/>
<dbReference type="OrthoDB" id="9802304at2"/>
<dbReference type="GO" id="GO:0005737">
    <property type="term" value="C:cytoplasm"/>
    <property type="evidence" value="ECO:0007669"/>
    <property type="project" value="UniProtKB-SubCell"/>
</dbReference>
<dbReference type="GO" id="GO:0005524">
    <property type="term" value="F:ATP binding"/>
    <property type="evidence" value="ECO:0007669"/>
    <property type="project" value="UniProtKB-UniRule"/>
</dbReference>
<dbReference type="GO" id="GO:0046872">
    <property type="term" value="F:metal ion binding"/>
    <property type="evidence" value="ECO:0007669"/>
    <property type="project" value="UniProtKB-KW"/>
</dbReference>
<dbReference type="GO" id="GO:0004829">
    <property type="term" value="F:threonine-tRNA ligase activity"/>
    <property type="evidence" value="ECO:0007669"/>
    <property type="project" value="UniProtKB-UniRule"/>
</dbReference>
<dbReference type="GO" id="GO:0000049">
    <property type="term" value="F:tRNA binding"/>
    <property type="evidence" value="ECO:0007669"/>
    <property type="project" value="UniProtKB-KW"/>
</dbReference>
<dbReference type="GO" id="GO:0006435">
    <property type="term" value="P:threonyl-tRNA aminoacylation"/>
    <property type="evidence" value="ECO:0007669"/>
    <property type="project" value="UniProtKB-UniRule"/>
</dbReference>
<dbReference type="CDD" id="cd00860">
    <property type="entry name" value="ThrRS_anticodon"/>
    <property type="match status" value="1"/>
</dbReference>
<dbReference type="CDD" id="cd00771">
    <property type="entry name" value="ThrRS_core"/>
    <property type="match status" value="1"/>
</dbReference>
<dbReference type="FunFam" id="3.30.54.20:FF:000003">
    <property type="entry name" value="Threonine--tRNA ligase"/>
    <property type="match status" value="1"/>
</dbReference>
<dbReference type="FunFam" id="3.30.930.10:FF:000019">
    <property type="entry name" value="Threonine--tRNA ligase"/>
    <property type="match status" value="1"/>
</dbReference>
<dbReference type="FunFam" id="3.40.50.800:FF:000001">
    <property type="entry name" value="Threonine--tRNA ligase"/>
    <property type="match status" value="1"/>
</dbReference>
<dbReference type="FunFam" id="3.30.980.10:FF:000005">
    <property type="entry name" value="Threonyl-tRNA synthetase, mitochondrial"/>
    <property type="match status" value="1"/>
</dbReference>
<dbReference type="Gene3D" id="3.30.54.20">
    <property type="match status" value="1"/>
</dbReference>
<dbReference type="Gene3D" id="3.40.50.800">
    <property type="entry name" value="Anticodon-binding domain"/>
    <property type="match status" value="1"/>
</dbReference>
<dbReference type="Gene3D" id="3.30.930.10">
    <property type="entry name" value="Bira Bifunctional Protein, Domain 2"/>
    <property type="match status" value="1"/>
</dbReference>
<dbReference type="Gene3D" id="3.30.980.10">
    <property type="entry name" value="Threonyl-trna Synthetase, Chain A, domain 2"/>
    <property type="match status" value="1"/>
</dbReference>
<dbReference type="HAMAP" id="MF_00184">
    <property type="entry name" value="Thr_tRNA_synth"/>
    <property type="match status" value="1"/>
</dbReference>
<dbReference type="InterPro" id="IPR002314">
    <property type="entry name" value="aa-tRNA-synt_IIb"/>
</dbReference>
<dbReference type="InterPro" id="IPR006195">
    <property type="entry name" value="aa-tRNA-synth_II"/>
</dbReference>
<dbReference type="InterPro" id="IPR045864">
    <property type="entry name" value="aa-tRNA-synth_II/BPL/LPL"/>
</dbReference>
<dbReference type="InterPro" id="IPR004154">
    <property type="entry name" value="Anticodon-bd"/>
</dbReference>
<dbReference type="InterPro" id="IPR036621">
    <property type="entry name" value="Anticodon-bd_dom_sf"/>
</dbReference>
<dbReference type="InterPro" id="IPR004095">
    <property type="entry name" value="TGS"/>
</dbReference>
<dbReference type="InterPro" id="IPR002320">
    <property type="entry name" value="Thr-tRNA-ligase_IIa"/>
</dbReference>
<dbReference type="InterPro" id="IPR018163">
    <property type="entry name" value="Thr/Ala-tRNA-synth_IIc_edit"/>
</dbReference>
<dbReference type="InterPro" id="IPR047246">
    <property type="entry name" value="ThrRS_anticodon"/>
</dbReference>
<dbReference type="InterPro" id="IPR033728">
    <property type="entry name" value="ThrRS_core"/>
</dbReference>
<dbReference type="InterPro" id="IPR012947">
    <property type="entry name" value="tRNA_SAD"/>
</dbReference>
<dbReference type="NCBIfam" id="TIGR00418">
    <property type="entry name" value="thrS"/>
    <property type="match status" value="1"/>
</dbReference>
<dbReference type="PANTHER" id="PTHR11451:SF44">
    <property type="entry name" value="THREONINE--TRNA LIGASE, CHLOROPLASTIC_MITOCHONDRIAL 2"/>
    <property type="match status" value="1"/>
</dbReference>
<dbReference type="PANTHER" id="PTHR11451">
    <property type="entry name" value="THREONINE-TRNA LIGASE"/>
    <property type="match status" value="1"/>
</dbReference>
<dbReference type="Pfam" id="PF03129">
    <property type="entry name" value="HGTP_anticodon"/>
    <property type="match status" value="1"/>
</dbReference>
<dbReference type="Pfam" id="PF00587">
    <property type="entry name" value="tRNA-synt_2b"/>
    <property type="match status" value="1"/>
</dbReference>
<dbReference type="Pfam" id="PF07973">
    <property type="entry name" value="tRNA_SAD"/>
    <property type="match status" value="1"/>
</dbReference>
<dbReference type="PRINTS" id="PR01047">
    <property type="entry name" value="TRNASYNTHTHR"/>
</dbReference>
<dbReference type="SMART" id="SM00863">
    <property type="entry name" value="tRNA_SAD"/>
    <property type="match status" value="1"/>
</dbReference>
<dbReference type="SUPFAM" id="SSF52954">
    <property type="entry name" value="Class II aaRS ABD-related"/>
    <property type="match status" value="1"/>
</dbReference>
<dbReference type="SUPFAM" id="SSF55681">
    <property type="entry name" value="Class II aaRS and biotin synthetases"/>
    <property type="match status" value="1"/>
</dbReference>
<dbReference type="SUPFAM" id="SSF55186">
    <property type="entry name" value="ThrRS/AlaRS common domain"/>
    <property type="match status" value="1"/>
</dbReference>
<dbReference type="PROSITE" id="PS50862">
    <property type="entry name" value="AA_TRNA_LIGASE_II"/>
    <property type="match status" value="1"/>
</dbReference>
<dbReference type="PROSITE" id="PS51880">
    <property type="entry name" value="TGS"/>
    <property type="match status" value="1"/>
</dbReference>
<name>SYT_MYCSK</name>
<keyword id="KW-0030">Aminoacyl-tRNA synthetase</keyword>
<keyword id="KW-0067">ATP-binding</keyword>
<keyword id="KW-0963">Cytoplasm</keyword>
<keyword id="KW-0436">Ligase</keyword>
<keyword id="KW-0479">Metal-binding</keyword>
<keyword id="KW-0547">Nucleotide-binding</keyword>
<keyword id="KW-0648">Protein biosynthesis</keyword>
<keyword id="KW-0694">RNA-binding</keyword>
<keyword id="KW-0820">tRNA-binding</keyword>
<keyword id="KW-0862">Zinc</keyword>
<feature type="chain" id="PRO_1000020442" description="Threonine--tRNA ligase">
    <location>
        <begin position="1"/>
        <end position="684"/>
    </location>
</feature>
<feature type="domain" description="TGS" evidence="2">
    <location>
        <begin position="1"/>
        <end position="66"/>
    </location>
</feature>
<feature type="region of interest" description="Catalytic" evidence="1">
    <location>
        <begin position="261"/>
        <end position="567"/>
    </location>
</feature>
<feature type="binding site" evidence="1">
    <location>
        <position position="366"/>
    </location>
    <ligand>
        <name>Zn(2+)</name>
        <dbReference type="ChEBI" id="CHEBI:29105"/>
    </ligand>
</feature>
<feature type="binding site" evidence="1">
    <location>
        <position position="417"/>
    </location>
    <ligand>
        <name>Zn(2+)</name>
        <dbReference type="ChEBI" id="CHEBI:29105"/>
    </ligand>
</feature>
<feature type="binding site" evidence="1">
    <location>
        <position position="544"/>
    </location>
    <ligand>
        <name>Zn(2+)</name>
        <dbReference type="ChEBI" id="CHEBI:29105"/>
    </ligand>
</feature>
<comment type="function">
    <text evidence="1">Catalyzes the attachment of threonine to tRNA(Thr) in a two-step reaction: L-threonine is first activated by ATP to form Thr-AMP and then transferred to the acceptor end of tRNA(Thr). Also edits incorrectly charged L-seryl-tRNA(Thr).</text>
</comment>
<comment type="catalytic activity">
    <reaction evidence="1">
        <text>tRNA(Thr) + L-threonine + ATP = L-threonyl-tRNA(Thr) + AMP + diphosphate + H(+)</text>
        <dbReference type="Rhea" id="RHEA:24624"/>
        <dbReference type="Rhea" id="RHEA-COMP:9670"/>
        <dbReference type="Rhea" id="RHEA-COMP:9704"/>
        <dbReference type="ChEBI" id="CHEBI:15378"/>
        <dbReference type="ChEBI" id="CHEBI:30616"/>
        <dbReference type="ChEBI" id="CHEBI:33019"/>
        <dbReference type="ChEBI" id="CHEBI:57926"/>
        <dbReference type="ChEBI" id="CHEBI:78442"/>
        <dbReference type="ChEBI" id="CHEBI:78534"/>
        <dbReference type="ChEBI" id="CHEBI:456215"/>
        <dbReference type="EC" id="6.1.1.3"/>
    </reaction>
</comment>
<comment type="cofactor">
    <cofactor evidence="1">
        <name>Zn(2+)</name>
        <dbReference type="ChEBI" id="CHEBI:29105"/>
    </cofactor>
    <text evidence="1">Binds 1 zinc ion per subunit.</text>
</comment>
<comment type="subunit">
    <text evidence="1">Homodimer.</text>
</comment>
<comment type="subcellular location">
    <subcellularLocation>
        <location evidence="1">Cytoplasm</location>
    </subcellularLocation>
</comment>
<comment type="similarity">
    <text evidence="1">Belongs to the class-II aminoacyl-tRNA synthetase family.</text>
</comment>
<proteinExistence type="inferred from homology"/>
<organism>
    <name type="scientific">Mycobacterium sp. (strain KMS)</name>
    <dbReference type="NCBI Taxonomy" id="189918"/>
    <lineage>
        <taxon>Bacteria</taxon>
        <taxon>Bacillati</taxon>
        <taxon>Actinomycetota</taxon>
        <taxon>Actinomycetes</taxon>
        <taxon>Mycobacteriales</taxon>
        <taxon>Mycobacteriaceae</taxon>
        <taxon>Mycobacterium</taxon>
    </lineage>
</organism>
<reference key="1">
    <citation type="submission" date="2006-12" db="EMBL/GenBank/DDBJ databases">
        <title>Complete sequence of chromosome of Mycobacterium sp. KMS.</title>
        <authorList>
            <consortium name="US DOE Joint Genome Institute"/>
            <person name="Copeland A."/>
            <person name="Lucas S."/>
            <person name="Lapidus A."/>
            <person name="Barry K."/>
            <person name="Detter J.C."/>
            <person name="Glavina del Rio T."/>
            <person name="Hammon N."/>
            <person name="Israni S."/>
            <person name="Dalin E."/>
            <person name="Tice H."/>
            <person name="Pitluck S."/>
            <person name="Kiss H."/>
            <person name="Brettin T."/>
            <person name="Bruce D."/>
            <person name="Han C."/>
            <person name="Tapia R."/>
            <person name="Gilna P."/>
            <person name="Schmutz J."/>
            <person name="Larimer F."/>
            <person name="Land M."/>
            <person name="Hauser L."/>
            <person name="Kyrpides N."/>
            <person name="Mikhailova N."/>
            <person name="Miller C.D."/>
            <person name="Richardson P."/>
        </authorList>
    </citation>
    <scope>NUCLEOTIDE SEQUENCE [LARGE SCALE GENOMIC DNA]</scope>
    <source>
        <strain>KMS</strain>
    </source>
</reference>
<sequence length="684" mass="76391">MSTAASPAPAAPIRVAAGTTAGAAVRDAGLPGRGAPDAIVVVREADGRLRDLSWTPDADVEVVPVPADSEDGRSVIRHSAAHVLAQAVQDLFPEAKLGIGPPITDGFYYDFDVPRAFTPEDLEALEKKMRKIVKDGQLFERRVYESEEEARRELANEPYKLELVDDKSGDPEVMEVGGDELTAYDNLNPRTRERVWGDLCRGPHIPTTKYIPAFKLTRSSAAYWRGDQTNASLQRIYGTAWESQEALDRHLELIEEAQRRDHRKLGVELDLFSFPDELGSGLPVFHPKGGIVRKELEDYSRAKHLQAGYEFVNTPHITKEQLYVTSGHLEWYADGMFPAMHIDAEYDADGAVRKPGQNYYLKPMNCPMHHLIYRSRGRSYRELPLRLFEFGSVYRYEKSGVVHGLTRVRGMTQDDAHIYATREQMRDELTSLLQFVLDLLSDYGLDEYYLELSTKDPDKYVGSDEIWDEATETLREVAEASGLDLVPDPGGAAFYGPKISVQVKDALGRNWQMSTIQLDFNMPERFELEYTAADGSRQRPVLIHRALFGSIERFFGVLTEHYAGAFPAWLAPVQVVGIPVADAHIPYLEDVAAQLRSRGVRVEIDGSDDRMAKKIVNHTNQRVPFMLLAGDKDVAAGAVSFRFGDRTQINGVPRDEAVEAIVGWIVERRNTAPTADLVKAGAGT</sequence>
<gene>
    <name evidence="1" type="primary">thrS</name>
    <name type="ordered locus">Mkms_2289</name>
</gene>